<name>GDF8_SHEEP</name>
<gene>
    <name type="primary">MSTN</name>
    <name type="synonym">GDF8</name>
</gene>
<feature type="signal peptide" evidence="3">
    <location>
        <begin position="1"/>
        <end position="23"/>
    </location>
</feature>
<feature type="propeptide" id="PRO_0000033964" evidence="3">
    <location>
        <begin position="24"/>
        <end position="266"/>
    </location>
</feature>
<feature type="chain" id="PRO_0000033965" description="Growth/differentiation factor 8">
    <location>
        <begin position="267"/>
        <end position="375"/>
    </location>
</feature>
<feature type="site" description="Cleavage" evidence="1">
    <location>
        <begin position="98"/>
        <end position="99"/>
    </location>
</feature>
<feature type="glycosylation site" description="N-linked (GlcNAc...) asparagine" evidence="3">
    <location>
        <position position="48"/>
    </location>
</feature>
<feature type="glycosylation site" description="N-linked (GlcNAc...) asparagine" evidence="3">
    <location>
        <position position="71"/>
    </location>
</feature>
<feature type="disulfide bond" evidence="2">
    <location>
        <begin position="272"/>
        <end position="282"/>
    </location>
</feature>
<feature type="disulfide bond" evidence="2">
    <location>
        <begin position="281"/>
        <end position="340"/>
    </location>
</feature>
<feature type="disulfide bond" evidence="2">
    <location>
        <begin position="309"/>
        <end position="372"/>
    </location>
</feature>
<feature type="disulfide bond" evidence="2">
    <location>
        <begin position="313"/>
        <end position="374"/>
    </location>
</feature>
<feature type="disulfide bond" description="Interchain" evidence="2">
    <location>
        <position position="339"/>
    </location>
</feature>
<proteinExistence type="evidence at transcript level"/>
<sequence>MQKLQIFVYIYLFMLLVAGPVDLNENSEQKENVEKKGLCNACLWRQNNKSSRLEAIKIQILSKLRLETAPNISKDAIRQLLPKAPPLRELIDQYDVQRDDSSDGSLEDDDYHVTTETVITMPTESDLLAEVQEKPKCCFFKFSSKIQHNKVVKAQLWIYLRPVKTPTTVFVQILRLIKPMKDGTRYTGIRSLKLDMNPGTGIWQSIDVKTVLQNWLKQPESNLGIEIKALDENGHDLAVTFPEPGEEGLNPFLEVKVTDTPKRSRRDFGLDCDEHSTESRCCRYPLTVDFEAFGWDWIIAPKRYKANYCSGECEFLFLQKYPHTHLVHQANPKGSAGPCCTPTKMSPINMLYFNGKEQIIYGKIPGMVVDRCGCS</sequence>
<dbReference type="EMBL" id="AF019622">
    <property type="protein sequence ID" value="AAB86689.1"/>
    <property type="molecule type" value="mRNA"/>
</dbReference>
<dbReference type="RefSeq" id="NP_001009428.1">
    <property type="nucleotide sequence ID" value="NM_001009428.3"/>
</dbReference>
<dbReference type="SMR" id="O18830"/>
<dbReference type="STRING" id="9940.ENSOARP00000017487"/>
<dbReference type="GlyCosmos" id="O18830">
    <property type="glycosylation" value="2 sites, No reported glycans"/>
</dbReference>
<dbReference type="PaxDb" id="9940-ENSOARP00000017487"/>
<dbReference type="Ensembl" id="ENSOART00185013477">
    <property type="protein sequence ID" value="ENSOARP00185006353"/>
    <property type="gene ID" value="ENSOARG00185008464"/>
</dbReference>
<dbReference type="Ensembl" id="ENSOART00215074607">
    <property type="protein sequence ID" value="ENSOARP00215040264"/>
    <property type="gene ID" value="ENSOARG00215044133"/>
</dbReference>
<dbReference type="Ensembl" id="ENSOART00220089436">
    <property type="protein sequence ID" value="ENSOARP00220047510"/>
    <property type="gene ID" value="ENSOARG00220054083"/>
</dbReference>
<dbReference type="Ensembl" id="ENSOART00225059365">
    <property type="protein sequence ID" value="ENSOARP00225029753"/>
    <property type="gene ID" value="ENSOARG00225035884"/>
</dbReference>
<dbReference type="Ensembl" id="ENSOART00260031254">
    <property type="protein sequence ID" value="ENSOARP00260015971"/>
    <property type="gene ID" value="ENSOARG00260019144"/>
</dbReference>
<dbReference type="GeneID" id="443449"/>
<dbReference type="KEGG" id="oas:443449"/>
<dbReference type="CTD" id="2660"/>
<dbReference type="eggNOG" id="KOG3900">
    <property type="taxonomic scope" value="Eukaryota"/>
</dbReference>
<dbReference type="HOGENOM" id="CLU_020515_6_1_1"/>
<dbReference type="OMA" id="CNACMWR"/>
<dbReference type="OrthoDB" id="5948587at2759"/>
<dbReference type="Proteomes" id="UP000002356">
    <property type="component" value="Chromosome 2"/>
</dbReference>
<dbReference type="Bgee" id="ENSOARG00000016285">
    <property type="expression patterns" value="Expressed in longissimus thoracis muscle and 23 other cell types or tissues"/>
</dbReference>
<dbReference type="ExpressionAtlas" id="O18830">
    <property type="expression patterns" value="baseline and differential"/>
</dbReference>
<dbReference type="GO" id="GO:0005615">
    <property type="term" value="C:extracellular space"/>
    <property type="evidence" value="ECO:0007669"/>
    <property type="project" value="UniProtKB-KW"/>
</dbReference>
<dbReference type="GO" id="GO:0005125">
    <property type="term" value="F:cytokine activity"/>
    <property type="evidence" value="ECO:0007669"/>
    <property type="project" value="UniProtKB-KW"/>
</dbReference>
<dbReference type="GO" id="GO:0008083">
    <property type="term" value="F:growth factor activity"/>
    <property type="evidence" value="ECO:0007669"/>
    <property type="project" value="UniProtKB-KW"/>
</dbReference>
<dbReference type="GO" id="GO:0008201">
    <property type="term" value="F:heparin binding"/>
    <property type="evidence" value="ECO:0007669"/>
    <property type="project" value="UniProtKB-KW"/>
</dbReference>
<dbReference type="GO" id="GO:0042802">
    <property type="term" value="F:identical protein binding"/>
    <property type="evidence" value="ECO:0000250"/>
    <property type="project" value="UniProtKB"/>
</dbReference>
<dbReference type="GO" id="GO:0042803">
    <property type="term" value="F:protein homodimerization activity"/>
    <property type="evidence" value="ECO:0007669"/>
    <property type="project" value="Ensembl"/>
</dbReference>
<dbReference type="GO" id="GO:0043539">
    <property type="term" value="F:protein serine/threonine kinase activator activity"/>
    <property type="evidence" value="ECO:0007669"/>
    <property type="project" value="Ensembl"/>
</dbReference>
<dbReference type="GO" id="GO:0071549">
    <property type="term" value="P:cellular response to dexamethasone stimulus"/>
    <property type="evidence" value="ECO:0007669"/>
    <property type="project" value="Ensembl"/>
</dbReference>
<dbReference type="GO" id="GO:0046716">
    <property type="term" value="P:muscle cell cellular homeostasis"/>
    <property type="evidence" value="ECO:0007669"/>
    <property type="project" value="Ensembl"/>
</dbReference>
<dbReference type="GO" id="GO:0014839">
    <property type="term" value="P:myoblast migration involved in skeletal muscle regeneration"/>
    <property type="evidence" value="ECO:0000250"/>
    <property type="project" value="UniProtKB"/>
</dbReference>
<dbReference type="GO" id="GO:0046627">
    <property type="term" value="P:negative regulation of insulin receptor signaling pathway"/>
    <property type="evidence" value="ECO:0007669"/>
    <property type="project" value="Ensembl"/>
</dbReference>
<dbReference type="GO" id="GO:0045662">
    <property type="term" value="P:negative regulation of myoblast differentiation"/>
    <property type="evidence" value="ECO:0007669"/>
    <property type="project" value="Ensembl"/>
</dbReference>
<dbReference type="GO" id="GO:0051898">
    <property type="term" value="P:negative regulation of phosphatidylinositol 3-kinase/protein kinase B signal transduction"/>
    <property type="evidence" value="ECO:0007669"/>
    <property type="project" value="Ensembl"/>
</dbReference>
<dbReference type="GO" id="GO:0048632">
    <property type="term" value="P:negative regulation of skeletal muscle tissue growth"/>
    <property type="evidence" value="ECO:0007669"/>
    <property type="project" value="Ensembl"/>
</dbReference>
<dbReference type="GO" id="GO:0045893">
    <property type="term" value="P:positive regulation of DNA-templated transcription"/>
    <property type="evidence" value="ECO:0007669"/>
    <property type="project" value="Ensembl"/>
</dbReference>
<dbReference type="GO" id="GO:0010592">
    <property type="term" value="P:positive regulation of lamellipodium assembly"/>
    <property type="evidence" value="ECO:0000250"/>
    <property type="project" value="UniProtKB"/>
</dbReference>
<dbReference type="GO" id="GO:0010759">
    <property type="term" value="P:positive regulation of macrophage chemotaxis"/>
    <property type="evidence" value="ECO:0000250"/>
    <property type="project" value="UniProtKB"/>
</dbReference>
<dbReference type="GO" id="GO:0014816">
    <property type="term" value="P:skeletal muscle satellite cell differentiation"/>
    <property type="evidence" value="ECO:0007669"/>
    <property type="project" value="Ensembl"/>
</dbReference>
<dbReference type="GO" id="GO:0007179">
    <property type="term" value="P:transforming growth factor beta receptor signaling pathway"/>
    <property type="evidence" value="ECO:0007669"/>
    <property type="project" value="Ensembl"/>
</dbReference>
<dbReference type="CDD" id="cd19388">
    <property type="entry name" value="TGF_beta_GDF8"/>
    <property type="match status" value="1"/>
</dbReference>
<dbReference type="FunFam" id="2.60.120.970:FF:000001">
    <property type="entry name" value="Growth/differentiation factor 8"/>
    <property type="match status" value="1"/>
</dbReference>
<dbReference type="FunFam" id="2.10.90.10:FF:000006">
    <property type="entry name" value="growth/differentiation factor 8"/>
    <property type="match status" value="1"/>
</dbReference>
<dbReference type="Gene3D" id="2.60.120.970">
    <property type="match status" value="1"/>
</dbReference>
<dbReference type="Gene3D" id="2.10.90.10">
    <property type="entry name" value="Cystine-knot cytokines"/>
    <property type="match status" value="1"/>
</dbReference>
<dbReference type="InterPro" id="IPR029034">
    <property type="entry name" value="Cystine-knot_cytokine"/>
</dbReference>
<dbReference type="InterPro" id="IPR001839">
    <property type="entry name" value="TGF-b_C"/>
</dbReference>
<dbReference type="InterPro" id="IPR001111">
    <property type="entry name" value="TGF-b_propeptide"/>
</dbReference>
<dbReference type="InterPro" id="IPR015615">
    <property type="entry name" value="TGF-beta-rel"/>
</dbReference>
<dbReference type="InterPro" id="IPR017948">
    <property type="entry name" value="TGFb_CS"/>
</dbReference>
<dbReference type="PANTHER" id="PTHR11848:SF150">
    <property type="entry name" value="GROWTH_DIFFERENTIATION FACTOR 8"/>
    <property type="match status" value="1"/>
</dbReference>
<dbReference type="PANTHER" id="PTHR11848">
    <property type="entry name" value="TGF-BETA FAMILY"/>
    <property type="match status" value="1"/>
</dbReference>
<dbReference type="Pfam" id="PF00019">
    <property type="entry name" value="TGF_beta"/>
    <property type="match status" value="1"/>
</dbReference>
<dbReference type="Pfam" id="PF00688">
    <property type="entry name" value="TGFb_propeptide"/>
    <property type="match status" value="1"/>
</dbReference>
<dbReference type="SMART" id="SM00204">
    <property type="entry name" value="TGFB"/>
    <property type="match status" value="1"/>
</dbReference>
<dbReference type="SUPFAM" id="SSF57501">
    <property type="entry name" value="Cystine-knot cytokines"/>
    <property type="match status" value="1"/>
</dbReference>
<dbReference type="PROSITE" id="PS00250">
    <property type="entry name" value="TGF_BETA_1"/>
    <property type="match status" value="1"/>
</dbReference>
<dbReference type="PROSITE" id="PS51362">
    <property type="entry name" value="TGF_BETA_2"/>
    <property type="match status" value="1"/>
</dbReference>
<comment type="function">
    <text evidence="1">Acts specifically as a negative regulator of skeletal muscle growth.</text>
</comment>
<comment type="subunit">
    <text evidence="1">Homodimer; disulfide-linked. Interacts with WFIKKN2, leading to inhibit its activity. Interacts with FSTL3.</text>
</comment>
<comment type="subcellular location">
    <subcellularLocation>
        <location evidence="1">Secreted</location>
    </subcellularLocation>
</comment>
<comment type="PTM">
    <text evidence="1">Synthesized as large precursor molecule that undergoes proteolytic cleavage to generate an N-terminal propeptide and a disulfide linked C-terminal dimer, which is the biologically active molecule. The circulating form consists of a latent complex of the C-terminal dimer and other proteins, including its propeptide, which maintain the C-terminal dimer in a latent, inactive state. Ligand activation requires additional cleavage of the prodomain by a tolloid-like metalloproteinase.</text>
</comment>
<comment type="similarity">
    <text evidence="4">Belongs to the TGF-beta family.</text>
</comment>
<accession>O18830</accession>
<protein>
    <recommendedName>
        <fullName>Growth/differentiation factor 8</fullName>
        <shortName>GDF-8</shortName>
    </recommendedName>
    <alternativeName>
        <fullName>Myostatin</fullName>
    </alternativeName>
</protein>
<keyword id="KW-0165">Cleavage on pair of basic residues</keyword>
<keyword id="KW-0202">Cytokine</keyword>
<keyword id="KW-1015">Disulfide bond</keyword>
<keyword id="KW-0325">Glycoprotein</keyword>
<keyword id="KW-0339">Growth factor</keyword>
<keyword id="KW-0358">Heparin-binding</keyword>
<keyword id="KW-1185">Reference proteome</keyword>
<keyword id="KW-0964">Secreted</keyword>
<keyword id="KW-0732">Signal</keyword>
<reference key="1">
    <citation type="journal article" date="1997" name="Proc. Natl. Acad. Sci. U.S.A.">
        <title>Double muscling in cattle due to mutations in the myostatin gene.</title>
        <authorList>
            <person name="McPherron A.C."/>
            <person name="Lee S.-J."/>
        </authorList>
    </citation>
    <scope>NUCLEOTIDE SEQUENCE [MRNA]</scope>
    <source>
        <tissue>Skeletal muscle</tissue>
    </source>
</reference>
<organism>
    <name type="scientific">Ovis aries</name>
    <name type="common">Sheep</name>
    <dbReference type="NCBI Taxonomy" id="9940"/>
    <lineage>
        <taxon>Eukaryota</taxon>
        <taxon>Metazoa</taxon>
        <taxon>Chordata</taxon>
        <taxon>Craniata</taxon>
        <taxon>Vertebrata</taxon>
        <taxon>Euteleostomi</taxon>
        <taxon>Mammalia</taxon>
        <taxon>Eutheria</taxon>
        <taxon>Laurasiatheria</taxon>
        <taxon>Artiodactyla</taxon>
        <taxon>Ruminantia</taxon>
        <taxon>Pecora</taxon>
        <taxon>Bovidae</taxon>
        <taxon>Caprinae</taxon>
        <taxon>Ovis</taxon>
    </lineage>
</organism>
<evidence type="ECO:0000250" key="1">
    <source>
        <dbReference type="UniProtKB" id="O08689"/>
    </source>
</evidence>
<evidence type="ECO:0000250" key="2">
    <source>
        <dbReference type="UniProtKB" id="O14793"/>
    </source>
</evidence>
<evidence type="ECO:0000255" key="3"/>
<evidence type="ECO:0000305" key="4"/>